<dbReference type="EC" id="7.1.2.2" evidence="1"/>
<dbReference type="EMBL" id="CT573213">
    <property type="protein sequence ID" value="CAJ64556.1"/>
    <property type="status" value="ALT_INIT"/>
    <property type="molecule type" value="Genomic_DNA"/>
</dbReference>
<dbReference type="RefSeq" id="WP_041939784.1">
    <property type="nucleotide sequence ID" value="NC_008278.1"/>
</dbReference>
<dbReference type="SMR" id="Q0RDB4"/>
<dbReference type="STRING" id="326424.FRAAL5931"/>
<dbReference type="KEGG" id="fal:FRAAL5931"/>
<dbReference type="eggNOG" id="COG0055">
    <property type="taxonomic scope" value="Bacteria"/>
</dbReference>
<dbReference type="HOGENOM" id="CLU_022398_0_2_11"/>
<dbReference type="OrthoDB" id="9801639at2"/>
<dbReference type="Proteomes" id="UP000000657">
    <property type="component" value="Chromosome"/>
</dbReference>
<dbReference type="GO" id="GO:0005886">
    <property type="term" value="C:plasma membrane"/>
    <property type="evidence" value="ECO:0007669"/>
    <property type="project" value="UniProtKB-SubCell"/>
</dbReference>
<dbReference type="GO" id="GO:0045259">
    <property type="term" value="C:proton-transporting ATP synthase complex"/>
    <property type="evidence" value="ECO:0007669"/>
    <property type="project" value="UniProtKB-KW"/>
</dbReference>
<dbReference type="GO" id="GO:0005524">
    <property type="term" value="F:ATP binding"/>
    <property type="evidence" value="ECO:0007669"/>
    <property type="project" value="UniProtKB-UniRule"/>
</dbReference>
<dbReference type="GO" id="GO:0016887">
    <property type="term" value="F:ATP hydrolysis activity"/>
    <property type="evidence" value="ECO:0007669"/>
    <property type="project" value="InterPro"/>
</dbReference>
<dbReference type="GO" id="GO:0046933">
    <property type="term" value="F:proton-transporting ATP synthase activity, rotational mechanism"/>
    <property type="evidence" value="ECO:0007669"/>
    <property type="project" value="UniProtKB-UniRule"/>
</dbReference>
<dbReference type="CDD" id="cd18110">
    <property type="entry name" value="ATP-synt_F1_beta_C"/>
    <property type="match status" value="1"/>
</dbReference>
<dbReference type="CDD" id="cd18115">
    <property type="entry name" value="ATP-synt_F1_beta_N"/>
    <property type="match status" value="1"/>
</dbReference>
<dbReference type="CDD" id="cd01133">
    <property type="entry name" value="F1-ATPase_beta_CD"/>
    <property type="match status" value="1"/>
</dbReference>
<dbReference type="FunFam" id="1.10.1140.10:FF:000001">
    <property type="entry name" value="ATP synthase subunit beta"/>
    <property type="match status" value="1"/>
</dbReference>
<dbReference type="FunFam" id="2.40.10.170:FF:000005">
    <property type="entry name" value="ATP synthase subunit beta"/>
    <property type="match status" value="1"/>
</dbReference>
<dbReference type="FunFam" id="3.40.50.300:FF:000004">
    <property type="entry name" value="ATP synthase subunit beta"/>
    <property type="match status" value="1"/>
</dbReference>
<dbReference type="Gene3D" id="2.40.10.170">
    <property type="match status" value="1"/>
</dbReference>
<dbReference type="Gene3D" id="1.10.1140.10">
    <property type="entry name" value="Bovine Mitochondrial F1-atpase, Atp Synthase Beta Chain, Chain D, domain 3"/>
    <property type="match status" value="1"/>
</dbReference>
<dbReference type="Gene3D" id="3.40.50.300">
    <property type="entry name" value="P-loop containing nucleotide triphosphate hydrolases"/>
    <property type="match status" value="1"/>
</dbReference>
<dbReference type="HAMAP" id="MF_01347">
    <property type="entry name" value="ATP_synth_beta_bact"/>
    <property type="match status" value="1"/>
</dbReference>
<dbReference type="InterPro" id="IPR003593">
    <property type="entry name" value="AAA+_ATPase"/>
</dbReference>
<dbReference type="InterPro" id="IPR055190">
    <property type="entry name" value="ATP-synt_VA_C"/>
</dbReference>
<dbReference type="InterPro" id="IPR005722">
    <property type="entry name" value="ATP_synth_F1_bsu"/>
</dbReference>
<dbReference type="InterPro" id="IPR050053">
    <property type="entry name" value="ATPase_alpha/beta_chains"/>
</dbReference>
<dbReference type="InterPro" id="IPR004100">
    <property type="entry name" value="ATPase_F1/V1/A1_a/bsu_N"/>
</dbReference>
<dbReference type="InterPro" id="IPR036121">
    <property type="entry name" value="ATPase_F1/V1/A1_a/bsu_N_sf"/>
</dbReference>
<dbReference type="InterPro" id="IPR000194">
    <property type="entry name" value="ATPase_F1/V1/A1_a/bsu_nucl-bd"/>
</dbReference>
<dbReference type="InterPro" id="IPR024034">
    <property type="entry name" value="ATPase_F1/V1_b/a_C"/>
</dbReference>
<dbReference type="InterPro" id="IPR027417">
    <property type="entry name" value="P-loop_NTPase"/>
</dbReference>
<dbReference type="NCBIfam" id="TIGR01039">
    <property type="entry name" value="atpD"/>
    <property type="match status" value="1"/>
</dbReference>
<dbReference type="PANTHER" id="PTHR15184">
    <property type="entry name" value="ATP SYNTHASE"/>
    <property type="match status" value="1"/>
</dbReference>
<dbReference type="PANTHER" id="PTHR15184:SF71">
    <property type="entry name" value="ATP SYNTHASE SUBUNIT BETA, MITOCHONDRIAL"/>
    <property type="match status" value="1"/>
</dbReference>
<dbReference type="Pfam" id="PF00006">
    <property type="entry name" value="ATP-synt_ab"/>
    <property type="match status" value="1"/>
</dbReference>
<dbReference type="Pfam" id="PF02874">
    <property type="entry name" value="ATP-synt_ab_N"/>
    <property type="match status" value="1"/>
</dbReference>
<dbReference type="Pfam" id="PF22919">
    <property type="entry name" value="ATP-synt_VA_C"/>
    <property type="match status" value="1"/>
</dbReference>
<dbReference type="SMART" id="SM00382">
    <property type="entry name" value="AAA"/>
    <property type="match status" value="1"/>
</dbReference>
<dbReference type="SUPFAM" id="SSF47917">
    <property type="entry name" value="C-terminal domain of alpha and beta subunits of F1 ATP synthase"/>
    <property type="match status" value="1"/>
</dbReference>
<dbReference type="SUPFAM" id="SSF50615">
    <property type="entry name" value="N-terminal domain of alpha and beta subunits of F1 ATP synthase"/>
    <property type="match status" value="1"/>
</dbReference>
<dbReference type="SUPFAM" id="SSF52540">
    <property type="entry name" value="P-loop containing nucleoside triphosphate hydrolases"/>
    <property type="match status" value="1"/>
</dbReference>
<evidence type="ECO:0000255" key="1">
    <source>
        <dbReference type="HAMAP-Rule" id="MF_01347"/>
    </source>
</evidence>
<evidence type="ECO:0000305" key="2"/>
<reference key="1">
    <citation type="journal article" date="2007" name="Genome Res.">
        <title>Genome characteristics of facultatively symbiotic Frankia sp. strains reflect host range and host plant biogeography.</title>
        <authorList>
            <person name="Normand P."/>
            <person name="Lapierre P."/>
            <person name="Tisa L.S."/>
            <person name="Gogarten J.P."/>
            <person name="Alloisio N."/>
            <person name="Bagnarol E."/>
            <person name="Bassi C.A."/>
            <person name="Berry A.M."/>
            <person name="Bickhart D.M."/>
            <person name="Choisne N."/>
            <person name="Couloux A."/>
            <person name="Cournoyer B."/>
            <person name="Cruveiller S."/>
            <person name="Daubin V."/>
            <person name="Demange N."/>
            <person name="Francino M.P."/>
            <person name="Goltsman E."/>
            <person name="Huang Y."/>
            <person name="Kopp O.R."/>
            <person name="Labarre L."/>
            <person name="Lapidus A."/>
            <person name="Lavire C."/>
            <person name="Marechal J."/>
            <person name="Martinez M."/>
            <person name="Mastronunzio J.E."/>
            <person name="Mullin B.C."/>
            <person name="Niemann J."/>
            <person name="Pujic P."/>
            <person name="Rawnsley T."/>
            <person name="Rouy Z."/>
            <person name="Schenowitz C."/>
            <person name="Sellstedt A."/>
            <person name="Tavares F."/>
            <person name="Tomkins J.P."/>
            <person name="Vallenet D."/>
            <person name="Valverde C."/>
            <person name="Wall L.G."/>
            <person name="Wang Y."/>
            <person name="Medigue C."/>
            <person name="Benson D.R."/>
        </authorList>
    </citation>
    <scope>NUCLEOTIDE SEQUENCE [LARGE SCALE GENOMIC DNA]</scope>
    <source>
        <strain>DSM 45986 / CECT 9034 / ACN14a</strain>
    </source>
</reference>
<keyword id="KW-0066">ATP synthesis</keyword>
<keyword id="KW-0067">ATP-binding</keyword>
<keyword id="KW-1003">Cell membrane</keyword>
<keyword id="KW-0139">CF(1)</keyword>
<keyword id="KW-0375">Hydrogen ion transport</keyword>
<keyword id="KW-0406">Ion transport</keyword>
<keyword id="KW-0472">Membrane</keyword>
<keyword id="KW-0547">Nucleotide-binding</keyword>
<keyword id="KW-1185">Reference proteome</keyword>
<keyword id="KW-1278">Translocase</keyword>
<keyword id="KW-0813">Transport</keyword>
<feature type="chain" id="PRO_0000339529" description="ATP synthase subunit beta">
    <location>
        <begin position="1"/>
        <end position="479"/>
    </location>
</feature>
<feature type="binding site" evidence="1">
    <location>
        <begin position="168"/>
        <end position="175"/>
    </location>
    <ligand>
        <name>ATP</name>
        <dbReference type="ChEBI" id="CHEBI:30616"/>
    </ligand>
</feature>
<proteinExistence type="inferred from homology"/>
<accession>Q0RDB4</accession>
<protein>
    <recommendedName>
        <fullName evidence="1">ATP synthase subunit beta</fullName>
        <ecNumber evidence="1">7.1.2.2</ecNumber>
    </recommendedName>
    <alternativeName>
        <fullName evidence="1">ATP synthase F1 sector subunit beta</fullName>
    </alternativeName>
    <alternativeName>
        <fullName evidence="1">F-ATPase subunit beta</fullName>
    </alternativeName>
</protein>
<name>ATPB_FRAAA</name>
<gene>
    <name evidence="1" type="primary">atpD</name>
    <name type="ordered locus">FRAAL5931</name>
</gene>
<organism>
    <name type="scientific">Frankia alni (strain DSM 45986 / CECT 9034 / ACN14a)</name>
    <dbReference type="NCBI Taxonomy" id="326424"/>
    <lineage>
        <taxon>Bacteria</taxon>
        <taxon>Bacillati</taxon>
        <taxon>Actinomycetota</taxon>
        <taxon>Actinomycetes</taxon>
        <taxon>Frankiales</taxon>
        <taxon>Frankiaceae</taxon>
        <taxon>Frankia</taxon>
    </lineage>
</organism>
<sequence length="479" mass="52445">MTVTTSSPATAEGRTPGIGRVARVIGPVVDVEFAPDELPEIYQALEVDRTIGGETLTLTLEVAQHIGDNTVRAISMQQTDGLVRGAVVRDTGAPISVPVGDATKGHVFNVLGTPLDVDKVDAETRWSIHRQAPAFDQLESKTEMFTTGIKVIDLLAPYVRGGKIGLFGGAGVGKTVIIQEMIRRVAKEFGGVSVFAGVGERTREGNDLFLEMTEAGVIEDTALVFGQMDEPPGTRLRVALGALTMAEYFRDVQKQDVLLFIDNIFRFTQAGSEVSTLLGRMPSAVGYQPTLADEMGVLQERITSTRGHSITSLQAIYVPADDLTDPAPATTFTHLDAQTVLDRSISDLGIYPAVSPLDSNSRILDARYLGQEHYDTAREVQRILQRYKDLQDIIAILGIDELSEEDKILVNRARRIQRFLSQPFFVAEQFTNIPGKFVPLDETIDSFKRLSQGDYDHLPEQAFFMCGGIEDAEKNAENL</sequence>
<comment type="function">
    <text evidence="1">Produces ATP from ADP in the presence of a proton gradient across the membrane. The catalytic sites are hosted primarily by the beta subunits.</text>
</comment>
<comment type="catalytic activity">
    <reaction evidence="1">
        <text>ATP + H2O + 4 H(+)(in) = ADP + phosphate + 5 H(+)(out)</text>
        <dbReference type="Rhea" id="RHEA:57720"/>
        <dbReference type="ChEBI" id="CHEBI:15377"/>
        <dbReference type="ChEBI" id="CHEBI:15378"/>
        <dbReference type="ChEBI" id="CHEBI:30616"/>
        <dbReference type="ChEBI" id="CHEBI:43474"/>
        <dbReference type="ChEBI" id="CHEBI:456216"/>
        <dbReference type="EC" id="7.1.2.2"/>
    </reaction>
</comment>
<comment type="subunit">
    <text evidence="1">F-type ATPases have 2 components, CF(1) - the catalytic core - and CF(0) - the membrane proton channel. CF(1) has five subunits: alpha(3), beta(3), gamma(1), delta(1), epsilon(1). CF(0) has three main subunits: a(1), b(2) and c(9-12). The alpha and beta chains form an alternating ring which encloses part of the gamma chain. CF(1) is attached to CF(0) by a central stalk formed by the gamma and epsilon chains, while a peripheral stalk is formed by the delta and b chains.</text>
</comment>
<comment type="subcellular location">
    <subcellularLocation>
        <location evidence="1">Cell membrane</location>
        <topology evidence="1">Peripheral membrane protein</topology>
    </subcellularLocation>
</comment>
<comment type="similarity">
    <text evidence="1">Belongs to the ATPase alpha/beta chains family.</text>
</comment>
<comment type="sequence caution" evidence="2">
    <conflict type="erroneous initiation">
        <sequence resource="EMBL-CDS" id="CAJ64556"/>
    </conflict>
</comment>